<feature type="chain" id="PRO_0000435565" description="Arylesterase">
    <location>
        <begin position="1"/>
        <end position="306"/>
    </location>
</feature>
<feature type="short sequence motif" description="Involved in the stabilization of the negatively charged intermediate by the formation of the oxyanion hole" evidence="1">
    <location>
        <begin position="82"/>
        <end position="84"/>
    </location>
</feature>
<feature type="active site" evidence="5">
    <location>
        <position position="156"/>
    </location>
</feature>
<feature type="active site" evidence="5">
    <location>
        <position position="251"/>
    </location>
</feature>
<feature type="active site" evidence="5">
    <location>
        <position position="281"/>
    </location>
</feature>
<feature type="mutagenesis site" description="3-fold loss of activity compared to wild-type." evidence="2">
    <original>C</original>
    <variation>S</variation>
    <location>
        <position position="105"/>
    </location>
</feature>
<feature type="mutagenesis site" description="4-fold loss of activity compared to wild-type." evidence="2">
    <original>C</original>
    <variation>S</variation>
    <location>
        <position position="107"/>
    </location>
</feature>
<feature type="mutagenesis site" description="28-fold loss of activity compared to wild-type." evidence="2">
    <original>C</original>
    <variation>S</variation>
    <location>
        <position position="129"/>
    </location>
</feature>
<feature type="mutagenesis site" description="Nearly loss of activity." evidence="2">
    <original>S</original>
    <variation>A</variation>
    <location>
        <position position="156"/>
    </location>
</feature>
<feature type="mutagenesis site" description="Nearly loss of activity." evidence="2">
    <original>D</original>
    <variation>N</variation>
    <location>
        <position position="251"/>
    </location>
</feature>
<feature type="mutagenesis site" description="5-fold loss of activity compared to wild-type." evidence="2">
    <original>H</original>
    <variation>N</variation>
    <location>
        <position position="281"/>
    </location>
</feature>
<feature type="helix" evidence="7">
    <location>
        <begin position="5"/>
        <end position="17"/>
    </location>
</feature>
<feature type="turn" evidence="7">
    <location>
        <begin position="22"/>
        <end position="24"/>
    </location>
</feature>
<feature type="helix" evidence="7">
    <location>
        <begin position="27"/>
        <end position="39"/>
    </location>
</feature>
<feature type="strand" evidence="7">
    <location>
        <begin position="48"/>
        <end position="56"/>
    </location>
</feature>
<feature type="strand" evidence="7">
    <location>
        <begin position="61"/>
        <end position="68"/>
    </location>
</feature>
<feature type="strand" evidence="7">
    <location>
        <begin position="77"/>
        <end position="81"/>
    </location>
</feature>
<feature type="turn" evidence="7">
    <location>
        <begin position="85"/>
        <end position="87"/>
    </location>
</feature>
<feature type="turn" evidence="7">
    <location>
        <begin position="91"/>
        <end position="94"/>
    </location>
</feature>
<feature type="helix" evidence="7">
    <location>
        <begin position="95"/>
        <end position="105"/>
    </location>
</feature>
<feature type="strand" evidence="7">
    <location>
        <begin position="107"/>
        <end position="112"/>
    </location>
</feature>
<feature type="turn" evidence="7">
    <location>
        <begin position="117"/>
        <end position="119"/>
    </location>
</feature>
<feature type="helix" evidence="7">
    <location>
        <begin position="124"/>
        <end position="138"/>
    </location>
</feature>
<feature type="helix" evidence="7">
    <location>
        <begin position="140"/>
        <end position="143"/>
    </location>
</feature>
<feature type="strand" evidence="7">
    <location>
        <begin position="150"/>
        <end position="155"/>
    </location>
</feature>
<feature type="helix" evidence="7">
    <location>
        <begin position="157"/>
        <end position="171"/>
    </location>
</feature>
<feature type="strand" evidence="7">
    <location>
        <begin position="177"/>
        <end position="183"/>
    </location>
</feature>
<feature type="helix" evidence="7">
    <location>
        <begin position="193"/>
        <end position="197"/>
    </location>
</feature>
<feature type="strand" evidence="7">
    <location>
        <begin position="198"/>
        <end position="203"/>
    </location>
</feature>
<feature type="strand" evidence="7">
    <location>
        <begin position="208"/>
        <end position="210"/>
    </location>
</feature>
<feature type="helix" evidence="7">
    <location>
        <begin position="212"/>
        <end position="217"/>
    </location>
</feature>
<feature type="helix" evidence="7">
    <location>
        <begin position="221"/>
        <end position="225"/>
    </location>
</feature>
<feature type="turn" evidence="7">
    <location>
        <begin position="227"/>
        <end position="229"/>
    </location>
</feature>
<feature type="helix" evidence="7">
    <location>
        <begin position="231"/>
        <end position="233"/>
    </location>
</feature>
<feature type="strand" evidence="7">
    <location>
        <begin position="242"/>
        <end position="250"/>
    </location>
</feature>
<feature type="helix" evidence="7">
    <location>
        <begin position="254"/>
        <end position="266"/>
    </location>
</feature>
<feature type="strand" evidence="7">
    <location>
        <begin position="271"/>
        <end position="280"/>
    </location>
</feature>
<feature type="helix" evidence="7">
    <location>
        <begin position="281"/>
        <end position="283"/>
    </location>
</feature>
<feature type="helix" evidence="7">
    <location>
        <begin position="287"/>
        <end position="305"/>
    </location>
</feature>
<gene>
    <name evidence="3" type="primary">are</name>
</gene>
<evidence type="ECO:0000250" key="1">
    <source>
        <dbReference type="UniProtKB" id="Q5NUF3"/>
    </source>
</evidence>
<evidence type="ECO:0000269" key="2">
    <source>
    </source>
</evidence>
<evidence type="ECO:0000303" key="3">
    <source>
    </source>
</evidence>
<evidence type="ECO:0000305" key="4"/>
<evidence type="ECO:0000305" key="5">
    <source>
    </source>
</evidence>
<evidence type="ECO:0000312" key="6">
    <source>
        <dbReference type="EMBL" id="CAR57941.1"/>
    </source>
</evidence>
<evidence type="ECO:0007829" key="7">
    <source>
        <dbReference type="PDB" id="5L2P"/>
    </source>
</evidence>
<name>ARE_SACSO</name>
<comment type="function">
    <text evidence="2">Has a broad substrate specificity. Hydrolyzes various p-nitrophenyl phosphates, aromatic esters and p-nitrophenyl fatty acids in vitro. Most active against paraoxon, phenyl acetate and p-nitrophenyl caproate (C6), respectively. Also has tributyrinase activity, but shows no hydrolytic activity toward other triacylglycerols including tricaprylin, trimyristin, tripalmitin or triolein in vitro.</text>
</comment>
<comment type="catalytic activity">
    <reaction evidence="2">
        <text>a phenyl acetate + H2O = a phenol + acetate + H(+)</text>
        <dbReference type="Rhea" id="RHEA:17309"/>
        <dbReference type="ChEBI" id="CHEBI:15377"/>
        <dbReference type="ChEBI" id="CHEBI:15378"/>
        <dbReference type="ChEBI" id="CHEBI:30089"/>
        <dbReference type="ChEBI" id="CHEBI:33853"/>
        <dbReference type="ChEBI" id="CHEBI:140310"/>
        <dbReference type="EC" id="3.1.1.2"/>
    </reaction>
</comment>
<comment type="catalytic activity">
    <reaction evidence="2">
        <text>An aryl dialkyl phosphate + H2O = dialkyl phosphate + an aryl alcohol.</text>
        <dbReference type="EC" id="3.1.8.1"/>
    </reaction>
</comment>
<comment type="activity regulation">
    <text evidence="2">Completely inhibited by chemical modifiers that are specific to Cys (HgCl(2) and p-chloromercuribenzoic acid), His (diethyl pyrocarbonate) and Ser (diisopropyl fluorophosphate and phenylmethanesulfonyl fluoride). No significant effect with chemical modifiers specific to Lys (pyridoxal 5'-phosphate) and Arg (phenylglyoxal). Not inhibited by inhibitors of A-esterases (paraoxon) or C-esterases (physostigmine/eserine). Activity is also not effected by incubation with 5 mM divalent cations for 30 minutes at 30 degrees Celsius or with 10 mM EDTA for 60 minutes at 75 degrees Celsius.</text>
</comment>
<comment type="biophysicochemical properties">
    <kinetics>
        <KM evidence="2">17 uM for phenyl acetate (PA)</KM>
        <KM evidence="2">29 uM for alpha-naphthyl acetate (alpha-NA)</KM>
        <KM evidence="2">224 uM for p-nitrophenyl butyrate (C4)</KM>
        <KM evidence="2">31 uM for p-nitrophenyl caproate (C6)</KM>
        <KM evidence="2">28 uM for p-nitrophenyl caprylate (C8)</KM>
        <KM evidence="2">81 uM for p-nitrophenyl caprate (C10)</KM>
        <KM evidence="2">122 uM for p-nitrophenyl laurate (C12)</KM>
        <KM evidence="2">276 uM for p-nitrophenyl palmitate (C16)</KM>
        <KM evidence="2">234 uM for p-nitrophenyl phosphate</KM>
        <KM evidence="2">5 uM for paraoxon</KM>
        <KM evidence="2">246 uM for methyl paraoxon</KM>
        <text evidence="2">kcat is 521 sec(-1) with PA as substrate. kcat is 450 sec(-1) with alpha-NA as substrate. kcat is 285 sec(-1) with p-nitrophenyl butyrate (C4) as substrate. kcat is 467 sec(-1) with p-nitrophenyl caproate (C6) as substrate. kcat is 410 sec(-1) with p-nitrophenyl caprylate (C8) as substrate. kcat is 341 sec(-1) with p-nitrophenyl caprate (C10) as substrate. kcat is 264 sec(-1) with p-nitrophenyl laurate (C12) as substrate. kcat is 265 sec(-1) with p-nitrophenyl palmitate (C16) as substrate. kcat is 269 sec(-1) with p-nitrophenyl phosphate as substrate. kcat is 597 sec(-1) with paraoxon as substrate. kcat is 342 sec(-1) with methyl paraoxon as substrate.</text>
    </kinetics>
    <phDependence>
        <text evidence="2">Optimum pH is 7.0.</text>
    </phDependence>
    <temperatureDependence>
        <text evidence="2">Optimum temperature is 94 degrees Celsius. Very thermostable, but rapidly inactivated above 94 degrees Celsius. Most of the activity is retained for 5 days at 50 degrees Celsius, and approximately 70% of the activity is retained after 5 days at 70 degrees Celsius. 52% of the activity is still retained after 50 hours at 90 degrees Celsius, but completely inactivated after 5 days at 90 degrees Celsius.</text>
    </temperatureDependence>
</comment>
<comment type="subunit">
    <text evidence="2">Monomer.</text>
</comment>
<comment type="mass spectrometry"/>
<comment type="similarity">
    <text evidence="4">Belongs to the 'GDXG' lipolytic enzyme family.</text>
</comment>
<keyword id="KW-0002">3D-structure</keyword>
<keyword id="KW-0903">Direct protein sequencing</keyword>
<keyword id="KW-0378">Hydrolase</keyword>
<keyword id="KW-0719">Serine esterase</keyword>
<proteinExistence type="evidence at protein level"/>
<sequence>MPLDPEVRNFLQVYYKANIIDFTKYQFQEIRQKVNELLAKAVPKDPVGETRDMKIKLEDYELPIRIYSPIKRTNNGLVMHFHGGAWILGSIETEDAISRILSNSCECTVISVDYRLAPEYKFPTAVYDCFNAIVWARDNAGELGIDKDKIATFGISAGGNLVAATSLLARDNKLKLTAQVPVVPFVYLDLASKSMNRYRKGYFLDINLPVDYGVKMYIRDEKDLYNPLFSPLIAEDLSNLPQAIVVTAEYDPLRDQGEAYAYRLMESGVPTLSFRVNGNVHAFLGSPRTSRQVTVMIGALLKDIFK</sequence>
<reference evidence="6" key="1">
    <citation type="journal article" date="2008" name="J. Bacteriol.">
        <title>A novel thermostable arylesterase from the archaeon Sulfolobus solfataricus P1: purification, characterization, and expression.</title>
        <authorList>
            <person name="Park Y.J."/>
            <person name="Yoon S.J."/>
            <person name="Lee H.B."/>
        </authorList>
    </citation>
    <scope>NUCLEOTIDE SEQUENCE [GENOMIC DNA]</scope>
    <scope>PROTEIN SEQUENCE OF 14-20</scope>
    <scope>FUNCTION</scope>
    <scope>CATALYTIC ACTIVITY</scope>
    <scope>ACTIVITY REGULATION</scope>
    <scope>BIOPHYSICOCHEMICAL PROPERTIES</scope>
    <scope>SUBSTRATE SPECIFICITY</scope>
    <scope>SUBUNIT</scope>
    <scope>MASS SPECTROMETRY</scope>
    <scope>MUTAGENESIS OF CYS-105; CYS-107; CYS-129; SER-156; ASP-251 AND HIS-281</scope>
    <source>
        <strain evidence="3">ATCC 35091 / DSM 1616 / JCM 8930 / NBRC 15331 / P1</strain>
    </source>
</reference>
<organism evidence="6">
    <name type="scientific">Saccharolobus solfataricus</name>
    <name type="common">Sulfolobus solfataricus</name>
    <dbReference type="NCBI Taxonomy" id="2287"/>
    <lineage>
        <taxon>Archaea</taxon>
        <taxon>Thermoproteota</taxon>
        <taxon>Thermoprotei</taxon>
        <taxon>Sulfolobales</taxon>
        <taxon>Sulfolobaceae</taxon>
        <taxon>Saccharolobus</taxon>
    </lineage>
</organism>
<protein>
    <recommendedName>
        <fullName evidence="3">Arylesterase</fullName>
        <shortName evidence="3">A-esterase</shortName>
        <ecNumber evidence="2">3.1.1.2</ecNumber>
    </recommendedName>
    <alternativeName>
        <fullName evidence="3">Paraoxonase</fullName>
        <ecNumber evidence="2">3.1.8.1</ecNumber>
    </alternativeName>
</protein>
<accession>B5BLW5</accession>
<dbReference type="EC" id="3.1.1.2" evidence="2"/>
<dbReference type="EC" id="3.1.8.1" evidence="2"/>
<dbReference type="EMBL" id="FM205057">
    <property type="protein sequence ID" value="CAR57941.1"/>
    <property type="molecule type" value="Genomic_DNA"/>
</dbReference>
<dbReference type="PDB" id="5L2P">
    <property type="method" value="X-ray"/>
    <property type="resolution" value="2.56 A"/>
    <property type="chains" value="A/B/C/D=1-306"/>
</dbReference>
<dbReference type="PDBsum" id="5L2P"/>
<dbReference type="SMR" id="B5BLW5"/>
<dbReference type="ESTHER" id="sulac-q4j9s2">
    <property type="family name" value="Hormone-sensitive_lipase_like"/>
</dbReference>
<dbReference type="BioCyc" id="MetaCyc:MONOMER-20863"/>
<dbReference type="BRENDA" id="3.1.1.2">
    <property type="organism ID" value="6163"/>
</dbReference>
<dbReference type="BRENDA" id="3.1.8.1">
    <property type="organism ID" value="6163"/>
</dbReference>
<dbReference type="GO" id="GO:0004063">
    <property type="term" value="F:aryldialkylphosphatase activity"/>
    <property type="evidence" value="ECO:0000314"/>
    <property type="project" value="UniProtKB"/>
</dbReference>
<dbReference type="GO" id="GO:0004064">
    <property type="term" value="F:arylesterase activity"/>
    <property type="evidence" value="ECO:0000314"/>
    <property type="project" value="UniProtKB"/>
</dbReference>
<dbReference type="Gene3D" id="3.40.50.1820">
    <property type="entry name" value="alpha/beta hydrolase"/>
    <property type="match status" value="1"/>
</dbReference>
<dbReference type="InterPro" id="IPR013094">
    <property type="entry name" value="AB_hydrolase_3"/>
</dbReference>
<dbReference type="InterPro" id="IPR029058">
    <property type="entry name" value="AB_hydrolase_fold"/>
</dbReference>
<dbReference type="InterPro" id="IPR050300">
    <property type="entry name" value="GDXG_lipolytic_enzyme"/>
</dbReference>
<dbReference type="PANTHER" id="PTHR48081">
    <property type="entry name" value="AB HYDROLASE SUPERFAMILY PROTEIN C4A8.06C"/>
    <property type="match status" value="1"/>
</dbReference>
<dbReference type="PANTHER" id="PTHR48081:SF8">
    <property type="entry name" value="ALPHA_BETA HYDROLASE FOLD-3 DOMAIN-CONTAINING PROTEIN-RELATED"/>
    <property type="match status" value="1"/>
</dbReference>
<dbReference type="Pfam" id="PF07859">
    <property type="entry name" value="Abhydrolase_3"/>
    <property type="match status" value="1"/>
</dbReference>
<dbReference type="SUPFAM" id="SSF53474">
    <property type="entry name" value="alpha/beta-Hydrolases"/>
    <property type="match status" value="1"/>
</dbReference>